<proteinExistence type="inferred from homology"/>
<gene>
    <name evidence="1" type="primary">aat</name>
    <name type="ordered locus">SDY_2376</name>
</gene>
<dbReference type="EC" id="2.3.2.6" evidence="1"/>
<dbReference type="EMBL" id="CP000034">
    <property type="protein sequence ID" value="ABB62451.1"/>
    <property type="molecule type" value="Genomic_DNA"/>
</dbReference>
<dbReference type="RefSeq" id="WP_001241684.1">
    <property type="nucleotide sequence ID" value="NC_007606.1"/>
</dbReference>
<dbReference type="RefSeq" id="YP_403942.1">
    <property type="nucleotide sequence ID" value="NC_007606.1"/>
</dbReference>
<dbReference type="SMR" id="Q32E04"/>
<dbReference type="STRING" id="300267.SDY_2376"/>
<dbReference type="EnsemblBacteria" id="ABB62451">
    <property type="protein sequence ID" value="ABB62451"/>
    <property type="gene ID" value="SDY_2376"/>
</dbReference>
<dbReference type="KEGG" id="sdy:SDY_2376"/>
<dbReference type="PATRIC" id="fig|300267.13.peg.2870"/>
<dbReference type="HOGENOM" id="CLU_075045_0_0_6"/>
<dbReference type="Proteomes" id="UP000002716">
    <property type="component" value="Chromosome"/>
</dbReference>
<dbReference type="GO" id="GO:0005737">
    <property type="term" value="C:cytoplasm"/>
    <property type="evidence" value="ECO:0007669"/>
    <property type="project" value="UniProtKB-SubCell"/>
</dbReference>
<dbReference type="GO" id="GO:0008914">
    <property type="term" value="F:leucyl-tRNA--protein transferase activity"/>
    <property type="evidence" value="ECO:0007669"/>
    <property type="project" value="UniProtKB-UniRule"/>
</dbReference>
<dbReference type="GO" id="GO:0030163">
    <property type="term" value="P:protein catabolic process"/>
    <property type="evidence" value="ECO:0007669"/>
    <property type="project" value="UniProtKB-UniRule"/>
</dbReference>
<dbReference type="FunFam" id="3.30.70.3550:FF:000001">
    <property type="entry name" value="Leucyl/phenylalanyl-tRNA--protein transferase"/>
    <property type="match status" value="1"/>
</dbReference>
<dbReference type="FunFam" id="3.40.630.70:FF:000001">
    <property type="entry name" value="Leucyl/phenylalanyl-tRNA--protein transferase"/>
    <property type="match status" value="1"/>
</dbReference>
<dbReference type="Gene3D" id="3.40.630.70">
    <property type="entry name" value="Leucyl/phenylalanyl-tRNA-protein transferase, C-terminal domain"/>
    <property type="match status" value="1"/>
</dbReference>
<dbReference type="Gene3D" id="3.30.70.3550">
    <property type="entry name" value="Leucyl/phenylalanyl-tRNA-protein transferase, N-terminal domain"/>
    <property type="match status" value="1"/>
</dbReference>
<dbReference type="HAMAP" id="MF_00688">
    <property type="entry name" value="Leu_Phe_trans"/>
    <property type="match status" value="1"/>
</dbReference>
<dbReference type="InterPro" id="IPR016181">
    <property type="entry name" value="Acyl_CoA_acyltransferase"/>
</dbReference>
<dbReference type="InterPro" id="IPR004616">
    <property type="entry name" value="Leu/Phe-tRNA_Trfase"/>
</dbReference>
<dbReference type="InterPro" id="IPR042203">
    <property type="entry name" value="Leu/Phe-tRNA_Trfase_C"/>
</dbReference>
<dbReference type="InterPro" id="IPR042221">
    <property type="entry name" value="Leu/Phe-tRNA_Trfase_N"/>
</dbReference>
<dbReference type="NCBIfam" id="TIGR00667">
    <property type="entry name" value="aat"/>
    <property type="match status" value="1"/>
</dbReference>
<dbReference type="PANTHER" id="PTHR30098">
    <property type="entry name" value="LEUCYL/PHENYLALANYL-TRNA--PROTEIN TRANSFERASE"/>
    <property type="match status" value="1"/>
</dbReference>
<dbReference type="PANTHER" id="PTHR30098:SF2">
    <property type="entry name" value="LEUCYL_PHENYLALANYL-TRNA--PROTEIN TRANSFERASE"/>
    <property type="match status" value="1"/>
</dbReference>
<dbReference type="Pfam" id="PF03588">
    <property type="entry name" value="Leu_Phe_trans"/>
    <property type="match status" value="1"/>
</dbReference>
<dbReference type="SUPFAM" id="SSF55729">
    <property type="entry name" value="Acyl-CoA N-acyltransferases (Nat)"/>
    <property type="match status" value="1"/>
</dbReference>
<evidence type="ECO:0000255" key="1">
    <source>
        <dbReference type="HAMAP-Rule" id="MF_00688"/>
    </source>
</evidence>
<protein>
    <recommendedName>
        <fullName evidence="1">Leucyl/phenylalanyl-tRNA--protein transferase</fullName>
        <ecNumber evidence="1">2.3.2.6</ecNumber>
    </recommendedName>
    <alternativeName>
        <fullName evidence="1">L/F-transferase</fullName>
    </alternativeName>
    <alternativeName>
        <fullName evidence="1">Leucyltransferase</fullName>
    </alternativeName>
    <alternativeName>
        <fullName evidence="1">Phenyalanyltransferase</fullName>
    </alternativeName>
</protein>
<sequence>MRLVQLSRHSIAFPSPEGALREPNGLLALGGDLSPARLLMAYQRGIFPWFSPGDPILWWSPDPRAVLWPESLHISRSMKRFHKRSPYRVTMNYAFGQVIEGCASDREEGTWITRGVVEAYHRLHELGHAHSIEVWREDELVGGMYGVAQGTLFCGESMFSRMENASKTALLVLCEEFIGHGGKLIDCQVLNDHTASLGACEIPRRDYLNYLNQMRLGRLPNNFWVPRCLFSPQE</sequence>
<reference key="1">
    <citation type="journal article" date="2005" name="Nucleic Acids Res.">
        <title>Genome dynamics and diversity of Shigella species, the etiologic agents of bacillary dysentery.</title>
        <authorList>
            <person name="Yang F."/>
            <person name="Yang J."/>
            <person name="Zhang X."/>
            <person name="Chen L."/>
            <person name="Jiang Y."/>
            <person name="Yan Y."/>
            <person name="Tang X."/>
            <person name="Wang J."/>
            <person name="Xiong Z."/>
            <person name="Dong J."/>
            <person name="Xue Y."/>
            <person name="Zhu Y."/>
            <person name="Xu X."/>
            <person name="Sun L."/>
            <person name="Chen S."/>
            <person name="Nie H."/>
            <person name="Peng J."/>
            <person name="Xu J."/>
            <person name="Wang Y."/>
            <person name="Yuan Z."/>
            <person name="Wen Y."/>
            <person name="Yao Z."/>
            <person name="Shen Y."/>
            <person name="Qiang B."/>
            <person name="Hou Y."/>
            <person name="Yu J."/>
            <person name="Jin Q."/>
        </authorList>
    </citation>
    <scope>NUCLEOTIDE SEQUENCE [LARGE SCALE GENOMIC DNA]</scope>
    <source>
        <strain>Sd197</strain>
    </source>
</reference>
<keyword id="KW-0012">Acyltransferase</keyword>
<keyword id="KW-0963">Cytoplasm</keyword>
<keyword id="KW-1185">Reference proteome</keyword>
<keyword id="KW-0808">Transferase</keyword>
<name>LFTR_SHIDS</name>
<feature type="chain" id="PRO_0000258099" description="Leucyl/phenylalanyl-tRNA--protein transferase">
    <location>
        <begin position="1"/>
        <end position="234"/>
    </location>
</feature>
<organism>
    <name type="scientific">Shigella dysenteriae serotype 1 (strain Sd197)</name>
    <dbReference type="NCBI Taxonomy" id="300267"/>
    <lineage>
        <taxon>Bacteria</taxon>
        <taxon>Pseudomonadati</taxon>
        <taxon>Pseudomonadota</taxon>
        <taxon>Gammaproteobacteria</taxon>
        <taxon>Enterobacterales</taxon>
        <taxon>Enterobacteriaceae</taxon>
        <taxon>Shigella</taxon>
    </lineage>
</organism>
<accession>Q32E04</accession>
<comment type="function">
    <text evidence="1">Functions in the N-end rule pathway of protein degradation where it conjugates Leu, Phe and, less efficiently, Met from aminoacyl-tRNAs to the N-termini of proteins containing an N-terminal arginine or lysine.</text>
</comment>
<comment type="catalytic activity">
    <reaction evidence="1">
        <text>N-terminal L-lysyl-[protein] + L-leucyl-tRNA(Leu) = N-terminal L-leucyl-L-lysyl-[protein] + tRNA(Leu) + H(+)</text>
        <dbReference type="Rhea" id="RHEA:12340"/>
        <dbReference type="Rhea" id="RHEA-COMP:9613"/>
        <dbReference type="Rhea" id="RHEA-COMP:9622"/>
        <dbReference type="Rhea" id="RHEA-COMP:12670"/>
        <dbReference type="Rhea" id="RHEA-COMP:12671"/>
        <dbReference type="ChEBI" id="CHEBI:15378"/>
        <dbReference type="ChEBI" id="CHEBI:65249"/>
        <dbReference type="ChEBI" id="CHEBI:78442"/>
        <dbReference type="ChEBI" id="CHEBI:78494"/>
        <dbReference type="ChEBI" id="CHEBI:133043"/>
        <dbReference type="EC" id="2.3.2.6"/>
    </reaction>
</comment>
<comment type="catalytic activity">
    <reaction evidence="1">
        <text>N-terminal L-arginyl-[protein] + L-leucyl-tRNA(Leu) = N-terminal L-leucyl-L-arginyl-[protein] + tRNA(Leu) + H(+)</text>
        <dbReference type="Rhea" id="RHEA:50416"/>
        <dbReference type="Rhea" id="RHEA-COMP:9613"/>
        <dbReference type="Rhea" id="RHEA-COMP:9622"/>
        <dbReference type="Rhea" id="RHEA-COMP:12672"/>
        <dbReference type="Rhea" id="RHEA-COMP:12673"/>
        <dbReference type="ChEBI" id="CHEBI:15378"/>
        <dbReference type="ChEBI" id="CHEBI:64719"/>
        <dbReference type="ChEBI" id="CHEBI:78442"/>
        <dbReference type="ChEBI" id="CHEBI:78494"/>
        <dbReference type="ChEBI" id="CHEBI:133044"/>
        <dbReference type="EC" id="2.3.2.6"/>
    </reaction>
</comment>
<comment type="catalytic activity">
    <reaction evidence="1">
        <text>L-phenylalanyl-tRNA(Phe) + an N-terminal L-alpha-aminoacyl-[protein] = an N-terminal L-phenylalanyl-L-alpha-aminoacyl-[protein] + tRNA(Phe)</text>
        <dbReference type="Rhea" id="RHEA:43632"/>
        <dbReference type="Rhea" id="RHEA-COMP:9668"/>
        <dbReference type="Rhea" id="RHEA-COMP:9699"/>
        <dbReference type="Rhea" id="RHEA-COMP:10636"/>
        <dbReference type="Rhea" id="RHEA-COMP:10637"/>
        <dbReference type="ChEBI" id="CHEBI:78442"/>
        <dbReference type="ChEBI" id="CHEBI:78531"/>
        <dbReference type="ChEBI" id="CHEBI:78597"/>
        <dbReference type="ChEBI" id="CHEBI:83561"/>
        <dbReference type="EC" id="2.3.2.6"/>
    </reaction>
</comment>
<comment type="subcellular location">
    <subcellularLocation>
        <location evidence="1">Cytoplasm</location>
    </subcellularLocation>
</comment>
<comment type="similarity">
    <text evidence="1">Belongs to the L/F-transferase family.</text>
</comment>